<keyword id="KW-1043">Host membrane</keyword>
<keyword id="KW-0472">Membrane</keyword>
<keyword id="KW-0964">Secreted</keyword>
<keyword id="KW-0732">Signal</keyword>
<keyword id="KW-0843">Virulence</keyword>
<comment type="function">
    <text evidence="2">Secreted effector that completely suppresses the host cell death induced by cell death-inducing proteins.</text>
</comment>
<comment type="subcellular location">
    <subcellularLocation>
        <location evidence="2">Secreted</location>
    </subcellularLocation>
    <subcellularLocation>
        <location evidence="2">Host membrane</location>
    </subcellularLocation>
</comment>
<comment type="domain">
    <text evidence="5">The RxLR-dEER motif acts to carry the protein into the host cell cytoplasm through binding to cell surface phosphatidylinositol-3-phosphate.</text>
</comment>
<comment type="similarity">
    <text evidence="4">Belongs to the RxLR effector family.</text>
</comment>
<accession>P0CV53</accession>
<sequence length="193" mass="22314">MRYLLAVLIAAAFVISSGTSVSTIADDELILSKDTTIGAAVAPTFHDDKRMLQTKAVNGLEEERGWPLLETGIGKIKMGGKKFKHATKRMFGMVSPAGEAKFEAYKGLHKLKRGLIRMYRRVKWWFQKNILRQKHALEEGATRAKHKVSEANQKLKHRTKESEKTAYHRLKEAFQKFRHRMKDFFKKMRVYAY</sequence>
<protein>
    <recommendedName>
        <fullName evidence="3">Secreted RxLR effector protein 126</fullName>
    </recommendedName>
</protein>
<reference key="1">
    <citation type="journal article" date="2018" name="Front. Plant Sci.">
        <title>In planta functional analysis and subcellular localization of the oomycete pathogen Plasmopara viticola candidate RXLR effector repertoire.</title>
        <authorList>
            <person name="Liu Y."/>
            <person name="Lan X."/>
            <person name="Song S."/>
            <person name="Yin L."/>
            <person name="Dry I.B."/>
            <person name="Qu J."/>
            <person name="Xiang J."/>
            <person name="Lu J."/>
        </authorList>
    </citation>
    <scope>NUCLEOTIDE SEQUENCE [MRNA]</scope>
    <scope>DOMAIN</scope>
    <scope>FUNCTION</scope>
    <scope>SUBCELLULAR LOCATION</scope>
</reference>
<gene>
    <name evidence="3" type="primary">RXLR126</name>
</gene>
<dbReference type="SMR" id="P0CV53"/>
<dbReference type="GO" id="GO:0005576">
    <property type="term" value="C:extracellular region"/>
    <property type="evidence" value="ECO:0007669"/>
    <property type="project" value="UniProtKB-SubCell"/>
</dbReference>
<dbReference type="GO" id="GO:0033644">
    <property type="term" value="C:host cell membrane"/>
    <property type="evidence" value="ECO:0007669"/>
    <property type="project" value="UniProtKB-SubCell"/>
</dbReference>
<dbReference type="GO" id="GO:0016020">
    <property type="term" value="C:membrane"/>
    <property type="evidence" value="ECO:0007669"/>
    <property type="project" value="UniProtKB-KW"/>
</dbReference>
<evidence type="ECO:0000255" key="1"/>
<evidence type="ECO:0000269" key="2">
    <source>
    </source>
</evidence>
<evidence type="ECO:0000303" key="3">
    <source>
    </source>
</evidence>
<evidence type="ECO:0000305" key="4"/>
<evidence type="ECO:0000305" key="5">
    <source>
    </source>
</evidence>
<feature type="signal peptide" evidence="1">
    <location>
        <begin position="1"/>
        <end position="20"/>
    </location>
</feature>
<feature type="chain" id="PRO_0000447962" description="Secreted RxLR effector protein 126">
    <location>
        <begin position="21"/>
        <end position="193"/>
    </location>
</feature>
<feature type="short sequence motif" description="RxLR-dEER" evidence="5">
    <location>
        <begin position="50"/>
        <end position="64"/>
    </location>
</feature>
<proteinExistence type="evidence at transcript level"/>
<organism>
    <name type="scientific">Plasmopara viticola</name>
    <name type="common">Downy mildew of grapevine</name>
    <name type="synonym">Botrytis viticola</name>
    <dbReference type="NCBI Taxonomy" id="143451"/>
    <lineage>
        <taxon>Eukaryota</taxon>
        <taxon>Sar</taxon>
        <taxon>Stramenopiles</taxon>
        <taxon>Oomycota</taxon>
        <taxon>Peronosporales</taxon>
        <taxon>Peronosporaceae</taxon>
        <taxon>Plasmopara</taxon>
    </lineage>
</organism>
<name>RL126_PLAVT</name>